<sequence length="845" mass="92136">MVVVACPNSSLVEAQMDADRSGSCSKYDYASAYSRLRSAARAAGTGVSSVLILSSPDVDSVCATRILTSLLLQDDIAHRIVPVEGYRTLLNTLSTVFAPHDNDNASSSSSSTTDVKSVVFINLGAVLSLPTTFNIPPSCTIHVIDSHRPWNLENLFATSHANDSVWCWDDGEIATKLCRQGGERDAFEKLEFDVDSDSESDSDSHSDSHSDSVSDPEDASDSNDSGSDSARSHDERQRDGSGGKRKRGSHSPLSRRRQRHKQGQRHKPRHRSTSASATRLTNAERHRYRNILTRYYARGESFGMSVSSMLYLLCESLGRADRESLWLAIVGLTSLYLSNNIDLETYETYSAAYASEVIAIEPTSSNAPTEAWSLDLLTNANNNAQEQAARSATATATGAARAQNRAVRSVISKNTKAEDADDRSIRIVGSELRLTLYRHWSLETAMYHTAYVAAKLGIWRERGLSKLRGLMAKMGFSLTAVRQNYTHMPLDLRRSLVRKLEAIAPEYGLTQLTYRGFERSLGFRTAPLGAADVVEGVSALLIGAHGIKIEVDTPGMVFASSSTTPLGNSFGANLNPANPNAQTSELFATKRVWNLGTALTDSITSAIGAATGNAWSNDQTEANGGLHVDVSSTQPALAAVASVQDVGALERAERRVATSNFYEAYRALDFSRSTSVDLLRSSVLLSEALHRKIVARGISLITNQSIRTLKNFRLAILRDGADLELFTHVDVLARLADWLTTSLRDIIVQQQASTNAQRKKQPAASTRLPFILAALHRAKDTFLVLGSTASAIDGVVQHNHFTAAFQHAASVSRARVRHDHFRTCSIHVRTSDLAAFVENVHLKIK</sequence>
<proteinExistence type="evidence at transcript level"/>
<reference key="1">
    <citation type="journal article" date="1997" name="Mol. Gen. Genet.">
        <title>Molecular cloning of a gene required for DNA replication in Ustilago maydis.</title>
        <authorList>
            <person name="Onel K."/>
            <person name="Holloman W.K."/>
        </authorList>
    </citation>
    <scope>NUCLEOTIDE SEQUENCE [GENOMIC DNA]</scope>
    <source>
        <strain>UCM3</strain>
    </source>
</reference>
<reference key="2">
    <citation type="journal article" date="2006" name="Nature">
        <title>Insights from the genome of the biotrophic fungal plant pathogen Ustilago maydis.</title>
        <authorList>
            <person name="Kaemper J."/>
            <person name="Kahmann R."/>
            <person name="Boelker M."/>
            <person name="Ma L.-J."/>
            <person name="Brefort T."/>
            <person name="Saville B.J."/>
            <person name="Banuett F."/>
            <person name="Kronstad J.W."/>
            <person name="Gold S.E."/>
            <person name="Mueller O."/>
            <person name="Perlin M.H."/>
            <person name="Woesten H.A.B."/>
            <person name="de Vries R."/>
            <person name="Ruiz-Herrera J."/>
            <person name="Reynaga-Pena C.G."/>
            <person name="Snetselaar K."/>
            <person name="McCann M."/>
            <person name="Perez-Martin J."/>
            <person name="Feldbruegge M."/>
            <person name="Basse C.W."/>
            <person name="Steinberg G."/>
            <person name="Ibeas J.I."/>
            <person name="Holloman W."/>
            <person name="Guzman P."/>
            <person name="Farman M.L."/>
            <person name="Stajich J.E."/>
            <person name="Sentandreu R."/>
            <person name="Gonzalez-Prieto J.M."/>
            <person name="Kennell J.C."/>
            <person name="Molina L."/>
            <person name="Schirawski J."/>
            <person name="Mendoza-Mendoza A."/>
            <person name="Greilinger D."/>
            <person name="Muench K."/>
            <person name="Roessel N."/>
            <person name="Scherer M."/>
            <person name="Vranes M."/>
            <person name="Ladendorf O."/>
            <person name="Vincon V."/>
            <person name="Fuchs U."/>
            <person name="Sandrock B."/>
            <person name="Meng S."/>
            <person name="Ho E.C.H."/>
            <person name="Cahill M.J."/>
            <person name="Boyce K.J."/>
            <person name="Klose J."/>
            <person name="Klosterman S.J."/>
            <person name="Deelstra H.J."/>
            <person name="Ortiz-Castellanos L."/>
            <person name="Li W."/>
            <person name="Sanchez-Alonso P."/>
            <person name="Schreier P.H."/>
            <person name="Haeuser-Hahn I."/>
            <person name="Vaupel M."/>
            <person name="Koopmann E."/>
            <person name="Friedrich G."/>
            <person name="Voss H."/>
            <person name="Schlueter T."/>
            <person name="Margolis J."/>
            <person name="Platt D."/>
            <person name="Swimmer C."/>
            <person name="Gnirke A."/>
            <person name="Chen F."/>
            <person name="Vysotskaia V."/>
            <person name="Mannhaupt G."/>
            <person name="Gueldener U."/>
            <person name="Muensterkoetter M."/>
            <person name="Haase D."/>
            <person name="Oesterheld M."/>
            <person name="Mewes H.-W."/>
            <person name="Mauceli E.W."/>
            <person name="DeCaprio D."/>
            <person name="Wade C.M."/>
            <person name="Butler J."/>
            <person name="Young S.K."/>
            <person name="Jaffe D.B."/>
            <person name="Calvo S.E."/>
            <person name="Nusbaum C."/>
            <person name="Galagan J.E."/>
            <person name="Birren B.W."/>
        </authorList>
    </citation>
    <scope>NUCLEOTIDE SEQUENCE [LARGE SCALE GENOMIC DNA]</scope>
    <source>
        <strain>DSM 14603 / FGSC 9021 / UM521</strain>
    </source>
</reference>
<reference key="3">
    <citation type="submission" date="2014-09" db="EMBL/GenBank/DDBJ databases">
        <authorList>
            <person name="Gueldener U."/>
            <person name="Muensterkoetter M."/>
            <person name="Walter M.C."/>
            <person name="Mannhaupt G."/>
            <person name="Kahmann R."/>
        </authorList>
    </citation>
    <scope>GENOME REANNOTATION</scope>
    <source>
        <strain>DSM 14603 / FGSC 9021 / UM521</strain>
    </source>
</reference>
<feature type="chain" id="PRO_0000192820" description="Protein TSD2">
    <location>
        <begin position="1"/>
        <end position="845"/>
    </location>
</feature>
<feature type="region of interest" description="Disordered" evidence="1">
    <location>
        <begin position="193"/>
        <end position="283"/>
    </location>
</feature>
<feature type="compositionally biased region" description="Basic and acidic residues" evidence="1">
    <location>
        <begin position="202"/>
        <end position="212"/>
    </location>
</feature>
<feature type="compositionally biased region" description="Basic and acidic residues" evidence="1">
    <location>
        <begin position="230"/>
        <end position="242"/>
    </location>
</feature>
<feature type="compositionally biased region" description="Basic residues" evidence="1">
    <location>
        <begin position="243"/>
        <end position="272"/>
    </location>
</feature>
<evidence type="ECO:0000256" key="1">
    <source>
        <dbReference type="SAM" id="MobiDB-lite"/>
    </source>
</evidence>
<evidence type="ECO:0000305" key="2"/>
<comment type="function">
    <text>Temperature-sensitive protein required for DNA synthesis. May be a transcription factor that regulates the level or influences the stability of DNA polymerases or auxiliary proteins.</text>
</comment>
<comment type="subcellular location">
    <subcellularLocation>
        <location evidence="2">Nucleus</location>
    </subcellularLocation>
</comment>
<comment type="developmental stage">
    <text>Is cell cycle-regulated; expression peaks in early S or G1 phase.</text>
</comment>
<comment type="similarity">
    <text evidence="2">Belongs to the CDC45 family.</text>
</comment>
<accession>Q99107</accession>
<accession>A0A0D1CJA7</accession>
<accession>Q4P293</accession>
<gene>
    <name type="primary">TSD2</name>
    <name type="ORF">UMAG_05770</name>
</gene>
<name>TSD2_MYCMD</name>
<organism>
    <name type="scientific">Mycosarcoma maydis</name>
    <name type="common">Corn smut fungus</name>
    <name type="synonym">Ustilago maydis</name>
    <dbReference type="NCBI Taxonomy" id="5270"/>
    <lineage>
        <taxon>Eukaryota</taxon>
        <taxon>Fungi</taxon>
        <taxon>Dikarya</taxon>
        <taxon>Basidiomycota</taxon>
        <taxon>Ustilaginomycotina</taxon>
        <taxon>Ustilaginomycetes</taxon>
        <taxon>Ustilaginales</taxon>
        <taxon>Ustilaginaceae</taxon>
        <taxon>Mycosarcoma</taxon>
    </lineage>
</organism>
<protein>
    <recommendedName>
        <fullName>Protein TSD2</fullName>
    </recommendedName>
</protein>
<dbReference type="EMBL" id="U50276">
    <property type="protein sequence ID" value="AAA93459.1"/>
    <property type="molecule type" value="Genomic_DNA"/>
</dbReference>
<dbReference type="EMBL" id="CM003155">
    <property type="protein sequence ID" value="KIS66988.1"/>
    <property type="molecule type" value="Genomic_DNA"/>
</dbReference>
<dbReference type="RefSeq" id="XP_011391503.1">
    <property type="nucleotide sequence ID" value="XM_011393201.1"/>
</dbReference>
<dbReference type="SMR" id="Q99107"/>
<dbReference type="FunCoup" id="Q99107">
    <property type="interactions" value="284"/>
</dbReference>
<dbReference type="STRING" id="237631.Q99107"/>
<dbReference type="EnsemblFungi" id="KIS66988">
    <property type="protein sequence ID" value="KIS66988"/>
    <property type="gene ID" value="UMAG_05770"/>
</dbReference>
<dbReference type="GeneID" id="23565565"/>
<dbReference type="KEGG" id="uma:UMAG_05770"/>
<dbReference type="VEuPathDB" id="FungiDB:UMAG_05770"/>
<dbReference type="eggNOG" id="KOG2475">
    <property type="taxonomic scope" value="Eukaryota"/>
</dbReference>
<dbReference type="HOGENOM" id="CLU_005871_3_0_1"/>
<dbReference type="InParanoid" id="Q99107"/>
<dbReference type="OMA" id="EDCFMEA"/>
<dbReference type="OrthoDB" id="10258882at2759"/>
<dbReference type="Proteomes" id="UP000000561">
    <property type="component" value="Chromosome 16"/>
</dbReference>
<dbReference type="GO" id="GO:0031261">
    <property type="term" value="C:DNA replication preinitiation complex"/>
    <property type="evidence" value="ECO:0000318"/>
    <property type="project" value="GO_Central"/>
</dbReference>
<dbReference type="GO" id="GO:0003682">
    <property type="term" value="F:chromatin binding"/>
    <property type="evidence" value="ECO:0000318"/>
    <property type="project" value="GO_Central"/>
</dbReference>
<dbReference type="GO" id="GO:0003688">
    <property type="term" value="F:DNA replication origin binding"/>
    <property type="evidence" value="ECO:0000318"/>
    <property type="project" value="GO_Central"/>
</dbReference>
<dbReference type="GO" id="GO:0003697">
    <property type="term" value="F:single-stranded DNA binding"/>
    <property type="evidence" value="ECO:0000318"/>
    <property type="project" value="GO_Central"/>
</dbReference>
<dbReference type="GO" id="GO:0006270">
    <property type="term" value="P:DNA replication initiation"/>
    <property type="evidence" value="ECO:0000318"/>
    <property type="project" value="GO_Central"/>
</dbReference>
<dbReference type="GO" id="GO:0000727">
    <property type="term" value="P:double-strand break repair via break-induced replication"/>
    <property type="evidence" value="ECO:0000318"/>
    <property type="project" value="GO_Central"/>
</dbReference>
<dbReference type="GO" id="GO:1902977">
    <property type="term" value="P:mitotic DNA replication preinitiation complex assembly"/>
    <property type="evidence" value="ECO:0000318"/>
    <property type="project" value="GO_Central"/>
</dbReference>
<dbReference type="InterPro" id="IPR003874">
    <property type="entry name" value="CDC45"/>
</dbReference>
<dbReference type="PANTHER" id="PTHR10507">
    <property type="entry name" value="CDC45-RELATED PROTEIN"/>
    <property type="match status" value="1"/>
</dbReference>
<dbReference type="PANTHER" id="PTHR10507:SF0">
    <property type="entry name" value="CELL DIVISION CONTROL PROTEIN 45 HOMOLOG"/>
    <property type="match status" value="1"/>
</dbReference>
<dbReference type="Pfam" id="PF02724">
    <property type="entry name" value="CDC45"/>
    <property type="match status" value="1"/>
</dbReference>
<keyword id="KW-0131">Cell cycle</keyword>
<keyword id="KW-0235">DNA replication</keyword>
<keyword id="KW-0539">Nucleus</keyword>
<keyword id="KW-1185">Reference proteome</keyword>